<evidence type="ECO:0000255" key="1"/>
<evidence type="ECO:0000305" key="2"/>
<gene>
    <name type="ordered locus">BH0177</name>
</gene>
<dbReference type="EMBL" id="BA000004">
    <property type="protein sequence ID" value="BAB03896.1"/>
    <property type="molecule type" value="Genomic_DNA"/>
</dbReference>
<dbReference type="PIR" id="A83672">
    <property type="entry name" value="A83672"/>
</dbReference>
<dbReference type="RefSeq" id="WP_010896359.1">
    <property type="nucleotide sequence ID" value="NC_002570.2"/>
</dbReference>
<dbReference type="STRING" id="272558.gene:10726017"/>
<dbReference type="KEGG" id="bha:BH0177"/>
<dbReference type="eggNOG" id="ENOG5033NZG">
    <property type="taxonomic scope" value="Bacteria"/>
</dbReference>
<dbReference type="HOGENOM" id="CLU_1045104_0_0_9"/>
<dbReference type="OrthoDB" id="2973679at2"/>
<dbReference type="Proteomes" id="UP000001258">
    <property type="component" value="Chromosome"/>
</dbReference>
<dbReference type="GO" id="GO:0005886">
    <property type="term" value="C:plasma membrane"/>
    <property type="evidence" value="ECO:0007669"/>
    <property type="project" value="UniProtKB-SubCell"/>
</dbReference>
<proteinExistence type="predicted"/>
<keyword id="KW-1003">Cell membrane</keyword>
<keyword id="KW-0472">Membrane</keyword>
<keyword id="KW-1185">Reference proteome</keyword>
<keyword id="KW-0812">Transmembrane</keyword>
<keyword id="KW-1133">Transmembrane helix</keyword>
<name>Y177_HALH5</name>
<reference key="1">
    <citation type="journal article" date="2000" name="Nucleic Acids Res.">
        <title>Complete genome sequence of the alkaliphilic bacterium Bacillus halodurans and genomic sequence comparison with Bacillus subtilis.</title>
        <authorList>
            <person name="Takami H."/>
            <person name="Nakasone K."/>
            <person name="Takaki Y."/>
            <person name="Maeno G."/>
            <person name="Sasaki R."/>
            <person name="Masui N."/>
            <person name="Fuji F."/>
            <person name="Hirama C."/>
            <person name="Nakamura Y."/>
            <person name="Ogasawara N."/>
            <person name="Kuhara S."/>
            <person name="Horikoshi K."/>
        </authorList>
    </citation>
    <scope>NUCLEOTIDE SEQUENCE [LARGE SCALE GENOMIC DNA]</scope>
    <source>
        <strain>ATCC BAA-125 / DSM 18197 / FERM 7344 / JCM 9153 / C-125</strain>
    </source>
</reference>
<comment type="subcellular location">
    <subcellularLocation>
        <location evidence="2">Cell membrane</location>
        <topology evidence="2">Multi-pass membrane protein</topology>
    </subcellularLocation>
</comment>
<organism>
    <name type="scientific">Halalkalibacterium halodurans (strain ATCC BAA-125 / DSM 18197 / FERM 7344 / JCM 9153 / C-125)</name>
    <name type="common">Bacillus halodurans</name>
    <dbReference type="NCBI Taxonomy" id="272558"/>
    <lineage>
        <taxon>Bacteria</taxon>
        <taxon>Bacillati</taxon>
        <taxon>Bacillota</taxon>
        <taxon>Bacilli</taxon>
        <taxon>Bacillales</taxon>
        <taxon>Bacillaceae</taxon>
        <taxon>Halalkalibacterium (ex Joshi et al. 2022)</taxon>
    </lineage>
</organism>
<protein>
    <recommendedName>
        <fullName>Uncharacterized protein BH0177</fullName>
    </recommendedName>
</protein>
<sequence>MKKRRSNLELLLQCFYRKKVYLSVFIVLALYCVNLLIENASSEKNVYDLLMQLTEFHPLTYTIIPTYLVVLTAHFSLGKMHHYLAFRCKDKRQWYNLNVSCIAIVTTGYSVLIAFIMLMQSLFVFRFENKWSTFAVDYYTYHATFLMNYSPLVYSIATLLLLWLLLFLLGLLFYVIFIWTKSPLVSLLFVFLLNIMNAAVTLGKIDTLTPVFFTDRVSIIQYVYKFDLNQDSFPYSIFVYWIMLIAVIYLIGWLVIQRVDFESEKGEKHHAS</sequence>
<accession>Q9KGC7</accession>
<feature type="chain" id="PRO_0000220726" description="Uncharacterized protein BH0177">
    <location>
        <begin position="1"/>
        <end position="272"/>
    </location>
</feature>
<feature type="transmembrane region" description="Helical" evidence="1">
    <location>
        <begin position="20"/>
        <end position="37"/>
    </location>
</feature>
<feature type="transmembrane region" description="Helical" evidence="1">
    <location>
        <begin position="57"/>
        <end position="77"/>
    </location>
</feature>
<feature type="transmembrane region" description="Helical" evidence="1">
    <location>
        <begin position="97"/>
        <end position="119"/>
    </location>
</feature>
<feature type="transmembrane region" description="Helical" evidence="1">
    <location>
        <begin position="155"/>
        <end position="177"/>
    </location>
</feature>
<feature type="transmembrane region" description="Helical" evidence="1">
    <location>
        <begin position="184"/>
        <end position="203"/>
    </location>
</feature>
<feature type="transmembrane region" description="Helical" evidence="1">
    <location>
        <begin position="234"/>
        <end position="256"/>
    </location>
</feature>